<keyword id="KW-0002">3D-structure</keyword>
<keyword id="KW-0319">Glycerol metabolism</keyword>
<keyword id="KW-0378">Hydrolase</keyword>
<keyword id="KW-0460">Magnesium</keyword>
<keyword id="KW-0479">Metal-binding</keyword>
<keyword id="KW-1185">Reference proteome</keyword>
<sequence>MKSIAQEHDCLLIDLDGTVFCGRQPTGGAVQSLSQVRSRKLFVTNNASRSADEVAAHLCELGFTATGEDVVTSAQSAAHLLAGQLAPGARVLIVGTEALANEVAAVGLRPVRRFEDRPDAVVQGLSMTTGWSDLAEAALAIRAGALWVAANVDPTLPTERGLLPGNGSMVAALRTATGMDPRVAGKPAPALMTEAVARGDFRAALVVGDRLDTDIEGANAAGLPSLMVLTGVNSAWDAVYAEPVRRPTYIGHDLRSLHQDSKLLAVAPQPGWQIDVGGGAVTVCANGDVDDLEFIDDGLSIVRAVASAVWEARAADLHQRPLRIEAGDERARAALQRWSLMRSDHPVTSVGTQ</sequence>
<comment type="function">
    <text evidence="2">Dephosphorylates D-glycerol 3-phosphate (sn-glycerol 1-phosphate). Is the final enzyme involved in the recycling/catabolism of glycerophospholipid polar heads. To a lesser extent, is also able to act on glycerol 2-phosphate and D-ribulose 5-phosphate, but cannot use D-glyceraldehyde 3-phosphate, dihydroxyacetone-phosphate, UMP or GMP as substrates.</text>
</comment>
<comment type="catalytic activity">
    <reaction evidence="2">
        <text>sn-glycerol 1-phosphate + H2O = glycerol + phosphate</text>
        <dbReference type="Rhea" id="RHEA:46084"/>
        <dbReference type="ChEBI" id="CHEBI:15377"/>
        <dbReference type="ChEBI" id="CHEBI:17754"/>
        <dbReference type="ChEBI" id="CHEBI:43474"/>
        <dbReference type="ChEBI" id="CHEBI:57685"/>
    </reaction>
    <physiologicalReaction direction="left-to-right" evidence="2">
        <dbReference type="Rhea" id="RHEA:46085"/>
    </physiologicalReaction>
</comment>
<comment type="cofactor">
    <cofactor evidence="2">
        <name>Mg(2+)</name>
        <dbReference type="ChEBI" id="CHEBI:18420"/>
    </cofactor>
    <cofactor evidence="2">
        <name>Co(2+)</name>
        <dbReference type="ChEBI" id="CHEBI:48828"/>
    </cofactor>
    <cofactor evidence="2">
        <name>Mn(2+)</name>
        <dbReference type="ChEBI" id="CHEBI:29035"/>
    </cofactor>
    <text evidence="2">Although Co(2+) and Mn(2+) support eight- and fourfold higher catalytic efficiency than Mg(2+), respectively, Mg(2+) is likely the physiologically relevant catalytic divalent metal ion.</text>
</comment>
<comment type="biophysicochemical properties">
    <kinetics>
        <KM evidence="2">0.89 mM for D,L-glycerol 3-phosphate</KM>
        <KM evidence="2">1.3 mM for D-ribulose 5-phosphate</KM>
        <KM evidence="2">2.01 mM for glycerol 2-phosphate</KM>
        <KM evidence="2">19.3 mM for p-nitrophenyl 3-phosphate</KM>
        <KM evidence="2">1.1 mM for L-glycerol 3-phosphate</KM>
        <text evidence="2">kcat is 0.77 sec(-1) with D,L-glycerol 3-phosphate as substrate. kcat is 0.18 sec(-1) with D-ribulose 5-phosphate as substrate. kcat is 0.18 sec(-1) with glycerol 2-phosphate as substrate. kcat is 1.00 sec(-1) with p-nitrophenyl 3-phosphate as substrate. kcat is 0.02 sec(-1) with L-glycerol 3-phosphate as substrate.</text>
    </kinetics>
</comment>
<comment type="pathway">
    <text evidence="2">Glycerolipid metabolism.</text>
</comment>
<comment type="subunit">
    <text evidence="2">Homodimer.</text>
</comment>
<comment type="domain">
    <text evidence="2">Crystal structures of Rv1692 reveal a unique architecture, a fusion of a predicted haloacid dehalogenase fold with a previously unidentified GCN5-related N-acetyltransferase (GNAT) region. Although not directly involved in acetyl transfer, or regulation of enzymatic activity in vitro, the GNAT region is critical for the solubility of the phosphatase.</text>
</comment>
<comment type="disruption phenotype">
    <text evidence="2">Deletion of this gene results in an accumulation of G3P and G3P-containing lipid polar heads.</text>
</comment>
<comment type="similarity">
    <text evidence="4">Belongs to the HAD-like hydrolase superfamily.</text>
</comment>
<comment type="caution">
    <text evidence="2">Although the enzyme shows affinity to L-glycerol 3-phosphate (sn-glycerol 3-phosphate), it hydrolyzes the substrate with poor efficacy and is therefore not associated with EC 3.1.3.21 / RHEA:11476.</text>
</comment>
<organism>
    <name type="scientific">Mycobacterium tuberculosis (strain ATCC 25618 / H37Rv)</name>
    <dbReference type="NCBI Taxonomy" id="83332"/>
    <lineage>
        <taxon>Bacteria</taxon>
        <taxon>Bacillati</taxon>
        <taxon>Actinomycetota</taxon>
        <taxon>Actinomycetes</taxon>
        <taxon>Mycobacteriales</taxon>
        <taxon>Mycobacteriaceae</taxon>
        <taxon>Mycobacterium</taxon>
        <taxon>Mycobacterium tuberculosis complex</taxon>
    </lineage>
</organism>
<gene>
    <name evidence="5" type="ordered locus">Rv1692</name>
</gene>
<dbReference type="EMBL" id="AL123456">
    <property type="protein sequence ID" value="CCP44457.1"/>
    <property type="molecule type" value="Genomic_DNA"/>
</dbReference>
<dbReference type="RefSeq" id="NP_216208.1">
    <property type="nucleotide sequence ID" value="NC_000962.3"/>
</dbReference>
<dbReference type="RefSeq" id="WP_003408380.1">
    <property type="nucleotide sequence ID" value="NZ_NVQJ01000010.1"/>
</dbReference>
<dbReference type="PDB" id="4I9G">
    <property type="method" value="X-ray"/>
    <property type="resolution" value="3.25 A"/>
    <property type="chains" value="A/B=1-353"/>
</dbReference>
<dbReference type="PDBsum" id="4I9G"/>
<dbReference type="SMR" id="O33194"/>
<dbReference type="FunCoup" id="O33194">
    <property type="interactions" value="162"/>
</dbReference>
<dbReference type="STRING" id="83332.Rv1692"/>
<dbReference type="SwissLipids" id="SLP:000001039"/>
<dbReference type="PaxDb" id="83332-Rv1692"/>
<dbReference type="DNASU" id="885241"/>
<dbReference type="GeneID" id="885241"/>
<dbReference type="KEGG" id="mtu:Rv1692"/>
<dbReference type="KEGG" id="mtv:RVBD_1692"/>
<dbReference type="PATRIC" id="fig|83332.111.peg.1880"/>
<dbReference type="TubercuList" id="Rv1692"/>
<dbReference type="eggNOG" id="COG0647">
    <property type="taxonomic scope" value="Bacteria"/>
</dbReference>
<dbReference type="HOGENOM" id="CLU_043473_1_0_11"/>
<dbReference type="InParanoid" id="O33194"/>
<dbReference type="OrthoDB" id="3400930at2"/>
<dbReference type="PhylomeDB" id="O33194"/>
<dbReference type="BRENDA" id="3.1.3.21">
    <property type="organism ID" value="3445"/>
</dbReference>
<dbReference type="EvolutionaryTrace" id="O33194"/>
<dbReference type="Proteomes" id="UP000001584">
    <property type="component" value="Chromosome"/>
</dbReference>
<dbReference type="GO" id="GO:0005737">
    <property type="term" value="C:cytoplasm"/>
    <property type="evidence" value="ECO:0000318"/>
    <property type="project" value="GO_Central"/>
</dbReference>
<dbReference type="GO" id="GO:0050897">
    <property type="term" value="F:cobalt ion binding"/>
    <property type="evidence" value="ECO:0000314"/>
    <property type="project" value="UniProtKB"/>
</dbReference>
<dbReference type="GO" id="GO:0000121">
    <property type="term" value="F:glycerol-1-phosphatase activity"/>
    <property type="evidence" value="ECO:0000314"/>
    <property type="project" value="UniProtKB"/>
</dbReference>
<dbReference type="GO" id="GO:0000287">
    <property type="term" value="F:magnesium ion binding"/>
    <property type="evidence" value="ECO:0000314"/>
    <property type="project" value="UniProtKB"/>
</dbReference>
<dbReference type="GO" id="GO:0030145">
    <property type="term" value="F:manganese ion binding"/>
    <property type="evidence" value="ECO:0000314"/>
    <property type="project" value="UniProtKB"/>
</dbReference>
<dbReference type="GO" id="GO:0016791">
    <property type="term" value="F:phosphatase activity"/>
    <property type="evidence" value="ECO:0000318"/>
    <property type="project" value="GO_Central"/>
</dbReference>
<dbReference type="GO" id="GO:0042803">
    <property type="term" value="F:protein homodimerization activity"/>
    <property type="evidence" value="ECO:0000314"/>
    <property type="project" value="UniProtKB"/>
</dbReference>
<dbReference type="GO" id="GO:0006071">
    <property type="term" value="P:glycerol metabolic process"/>
    <property type="evidence" value="ECO:0007669"/>
    <property type="project" value="UniProtKB-KW"/>
</dbReference>
<dbReference type="GO" id="GO:0046475">
    <property type="term" value="P:glycerophospholipid catabolic process"/>
    <property type="evidence" value="ECO:0000315"/>
    <property type="project" value="UniProtKB"/>
</dbReference>
<dbReference type="CDD" id="cd07530">
    <property type="entry name" value="HAD_Pase_UmpH-like"/>
    <property type="match status" value="1"/>
</dbReference>
<dbReference type="FunFam" id="3.40.50.1000:FF:000266">
    <property type="entry name" value="PROBABLE PHOSPHATASE"/>
    <property type="match status" value="1"/>
</dbReference>
<dbReference type="Gene3D" id="3.30.300.290">
    <property type="match status" value="1"/>
</dbReference>
<dbReference type="Gene3D" id="3.40.50.1000">
    <property type="entry name" value="HAD superfamily/HAD-like"/>
    <property type="match status" value="2"/>
</dbReference>
<dbReference type="InterPro" id="IPR041065">
    <property type="entry name" value="GNAT-like"/>
</dbReference>
<dbReference type="InterPro" id="IPR036412">
    <property type="entry name" value="HAD-like_sf"/>
</dbReference>
<dbReference type="InterPro" id="IPR006357">
    <property type="entry name" value="HAD-SF_hydro_IIA"/>
</dbReference>
<dbReference type="InterPro" id="IPR023214">
    <property type="entry name" value="HAD_sf"/>
</dbReference>
<dbReference type="NCBIfam" id="TIGR01460">
    <property type="entry name" value="HAD-SF-IIA"/>
    <property type="match status" value="1"/>
</dbReference>
<dbReference type="PANTHER" id="PTHR19288">
    <property type="entry name" value="4-NITROPHENYLPHOSPHATASE-RELATED"/>
    <property type="match status" value="1"/>
</dbReference>
<dbReference type="PANTHER" id="PTHR19288:SF95">
    <property type="entry name" value="D-GLYCEROL 3-PHOSPHATE PHOSPHATASE"/>
    <property type="match status" value="1"/>
</dbReference>
<dbReference type="Pfam" id="PF18407">
    <property type="entry name" value="GNAT_like"/>
    <property type="match status" value="1"/>
</dbReference>
<dbReference type="Pfam" id="PF13344">
    <property type="entry name" value="Hydrolase_6"/>
    <property type="match status" value="1"/>
</dbReference>
<dbReference type="Pfam" id="PF13242">
    <property type="entry name" value="Hydrolase_like"/>
    <property type="match status" value="1"/>
</dbReference>
<dbReference type="SUPFAM" id="SSF56784">
    <property type="entry name" value="HAD-like"/>
    <property type="match status" value="1"/>
</dbReference>
<evidence type="ECO:0000250" key="1">
    <source>
        <dbReference type="UniProtKB" id="Q96GD0"/>
    </source>
</evidence>
<evidence type="ECO:0000269" key="2">
    <source>
    </source>
</evidence>
<evidence type="ECO:0000303" key="3">
    <source>
    </source>
</evidence>
<evidence type="ECO:0000305" key="4"/>
<evidence type="ECO:0000312" key="5">
    <source>
        <dbReference type="EMBL" id="CCP44457.1"/>
    </source>
</evidence>
<evidence type="ECO:0007744" key="6">
    <source>
        <dbReference type="PDB" id="4I9G"/>
    </source>
</evidence>
<evidence type="ECO:0007829" key="7">
    <source>
        <dbReference type="PDB" id="4I9G"/>
    </source>
</evidence>
<name>G3PP_MYCTU</name>
<proteinExistence type="evidence at protein level"/>
<reference key="1">
    <citation type="journal article" date="1998" name="Nature">
        <title>Deciphering the biology of Mycobacterium tuberculosis from the complete genome sequence.</title>
        <authorList>
            <person name="Cole S.T."/>
            <person name="Brosch R."/>
            <person name="Parkhill J."/>
            <person name="Garnier T."/>
            <person name="Churcher C.M."/>
            <person name="Harris D.E."/>
            <person name="Gordon S.V."/>
            <person name="Eiglmeier K."/>
            <person name="Gas S."/>
            <person name="Barry C.E. III"/>
            <person name="Tekaia F."/>
            <person name="Badcock K."/>
            <person name="Basham D."/>
            <person name="Brown D."/>
            <person name="Chillingworth T."/>
            <person name="Connor R."/>
            <person name="Davies R.M."/>
            <person name="Devlin K."/>
            <person name="Feltwell T."/>
            <person name="Gentles S."/>
            <person name="Hamlin N."/>
            <person name="Holroyd S."/>
            <person name="Hornsby T."/>
            <person name="Jagels K."/>
            <person name="Krogh A."/>
            <person name="McLean J."/>
            <person name="Moule S."/>
            <person name="Murphy L.D."/>
            <person name="Oliver S."/>
            <person name="Osborne J."/>
            <person name="Quail M.A."/>
            <person name="Rajandream M.A."/>
            <person name="Rogers J."/>
            <person name="Rutter S."/>
            <person name="Seeger K."/>
            <person name="Skelton S."/>
            <person name="Squares S."/>
            <person name="Squares R."/>
            <person name="Sulston J.E."/>
            <person name="Taylor K."/>
            <person name="Whitehead S."/>
            <person name="Barrell B.G."/>
        </authorList>
    </citation>
    <scope>NUCLEOTIDE SEQUENCE [LARGE SCALE GENOMIC DNA]</scope>
    <source>
        <strain>ATCC 25618 / H37Rv</strain>
    </source>
</reference>
<reference key="2">
    <citation type="journal article" date="2011" name="Mol. Cell. Proteomics">
        <title>Proteogenomic analysis of Mycobacterium tuberculosis by high resolution mass spectrometry.</title>
        <authorList>
            <person name="Kelkar D.S."/>
            <person name="Kumar D."/>
            <person name="Kumar P."/>
            <person name="Balakrishnan L."/>
            <person name="Muthusamy B."/>
            <person name="Yadav A.K."/>
            <person name="Shrivastava P."/>
            <person name="Marimuthu A."/>
            <person name="Anand S."/>
            <person name="Sundaram H."/>
            <person name="Kingsbury R."/>
            <person name="Harsha H.C."/>
            <person name="Nair B."/>
            <person name="Prasad T.S."/>
            <person name="Chauhan D.S."/>
            <person name="Katoch K."/>
            <person name="Katoch V.M."/>
            <person name="Kumar P."/>
            <person name="Chaerkady R."/>
            <person name="Ramachandran S."/>
            <person name="Dash D."/>
            <person name="Pandey A."/>
        </authorList>
    </citation>
    <scope>IDENTIFICATION BY MASS SPECTROMETRY [LARGE SCALE ANALYSIS]</scope>
    <source>
        <strain>ATCC 25618 / H37Rv</strain>
    </source>
</reference>
<reference key="3">
    <citation type="journal article" date="2013" name="Proc. Natl. Acad. Sci. U.S.A.">
        <title>Discovery of a glycerol 3-phosphate phosphatase reveals glycerophospholipid polar head recycling in Mycobacterium tuberculosis.</title>
        <authorList>
            <person name="Larrouy-Maumus G."/>
            <person name="Biswas T."/>
            <person name="Hunt D.M."/>
            <person name="Kelly G."/>
            <person name="Tsodikov O.V."/>
            <person name="de Carvalho L.P."/>
        </authorList>
    </citation>
    <scope>X-RAY CRYSTALLOGRAPHY (3.25 ANGSTROMS) IN COMPLEX WITH MAGNESIUM</scope>
    <scope>FUNCTION</scope>
    <scope>CATALYTIC ACTIVITY</scope>
    <scope>COFACTOR</scope>
    <scope>BIOPHYSICOCHEMICAL PROPERTIES</scope>
    <scope>SUBSTRATE SPECIFICITY</scope>
    <scope>DISRUPTION PHENOTYPE</scope>
    <scope>PATHWAY</scope>
    <scope>SUBUNIT</scope>
    <scope>DOMAIN</scope>
    <source>
        <strain>H37Rv</strain>
    </source>
</reference>
<protein>
    <recommendedName>
        <fullName evidence="4">D-glycerol 3-phosphate phosphatase</fullName>
    </recommendedName>
    <alternativeName>
        <fullName evidence="3">D,L-glycerol 3-phosphate phosphatase</fullName>
        <shortName evidence="3">G3P phosphatase</shortName>
    </alternativeName>
</protein>
<feature type="chain" id="PRO_0000435901" description="D-glycerol 3-phosphate phosphatase">
    <location>
        <begin position="1"/>
        <end position="353"/>
    </location>
</feature>
<feature type="active site" description="Nucleophile" evidence="1">
    <location>
        <position position="14"/>
    </location>
</feature>
<feature type="active site" description="Proton donor" evidence="1">
    <location>
        <position position="16"/>
    </location>
</feature>
<feature type="binding site" evidence="2 6">
    <location>
        <position position="14"/>
    </location>
    <ligand>
        <name>Mg(2+)</name>
        <dbReference type="ChEBI" id="CHEBI:18420"/>
    </ligand>
</feature>
<feature type="binding site" evidence="2 6">
    <location>
        <position position="16"/>
    </location>
    <ligand>
        <name>Mg(2+)</name>
        <dbReference type="ChEBI" id="CHEBI:18420"/>
    </ligand>
</feature>
<feature type="binding site" evidence="2 6">
    <location>
        <position position="209"/>
    </location>
    <ligand>
        <name>Mg(2+)</name>
        <dbReference type="ChEBI" id="CHEBI:18420"/>
    </ligand>
</feature>
<feature type="turn" evidence="7">
    <location>
        <begin position="4"/>
        <end position="7"/>
    </location>
</feature>
<feature type="strand" evidence="7">
    <location>
        <begin position="9"/>
        <end position="14"/>
    </location>
</feature>
<feature type="turn" evidence="7">
    <location>
        <begin position="15"/>
        <end position="18"/>
    </location>
</feature>
<feature type="strand" evidence="7">
    <location>
        <begin position="19"/>
        <end position="21"/>
    </location>
</feature>
<feature type="helix" evidence="7">
    <location>
        <begin position="29"/>
        <end position="34"/>
    </location>
</feature>
<feature type="strand" evidence="7">
    <location>
        <begin position="38"/>
        <end position="44"/>
    </location>
</feature>
<feature type="helix" evidence="7">
    <location>
        <begin position="51"/>
        <end position="61"/>
    </location>
</feature>
<feature type="helix" evidence="7">
    <location>
        <begin position="67"/>
        <end position="69"/>
    </location>
</feature>
<feature type="strand" evidence="7">
    <location>
        <begin position="70"/>
        <end position="72"/>
    </location>
</feature>
<feature type="helix" evidence="7">
    <location>
        <begin position="73"/>
        <end position="82"/>
    </location>
</feature>
<feature type="strand" evidence="7">
    <location>
        <begin position="90"/>
        <end position="95"/>
    </location>
</feature>
<feature type="helix" evidence="7">
    <location>
        <begin position="97"/>
        <end position="104"/>
    </location>
</feature>
<feature type="turn" evidence="7">
    <location>
        <begin position="105"/>
        <end position="107"/>
    </location>
</feature>
<feature type="strand" evidence="7">
    <location>
        <begin position="109"/>
        <end position="111"/>
    </location>
</feature>
<feature type="strand" evidence="7">
    <location>
        <begin position="119"/>
        <end position="123"/>
    </location>
</feature>
<feature type="helix" evidence="7">
    <location>
        <begin position="131"/>
        <end position="142"/>
    </location>
</feature>
<feature type="strand" evidence="7">
    <location>
        <begin position="146"/>
        <end position="150"/>
    </location>
</feature>
<feature type="strand" evidence="7">
    <location>
        <begin position="154"/>
        <end position="158"/>
    </location>
</feature>
<feature type="strand" evidence="7">
    <location>
        <begin position="161"/>
        <end position="164"/>
    </location>
</feature>
<feature type="helix" evidence="7">
    <location>
        <begin position="166"/>
        <end position="177"/>
    </location>
</feature>
<feature type="helix" evidence="7">
    <location>
        <begin position="190"/>
        <end position="199"/>
    </location>
</feature>
<feature type="strand" evidence="7">
    <location>
        <begin position="202"/>
        <end position="209"/>
    </location>
</feature>
<feature type="turn" evidence="7">
    <location>
        <begin position="211"/>
        <end position="213"/>
    </location>
</feature>
<feature type="helix" evidence="7">
    <location>
        <begin position="214"/>
        <end position="220"/>
    </location>
</feature>
<feature type="strand" evidence="7">
    <location>
        <begin position="225"/>
        <end position="228"/>
    </location>
</feature>
<feature type="helix" evidence="7">
    <location>
        <begin position="235"/>
        <end position="239"/>
    </location>
</feature>
<feature type="helix" evidence="7">
    <location>
        <begin position="243"/>
        <end position="245"/>
    </location>
</feature>
<feature type="strand" evidence="7">
    <location>
        <begin position="248"/>
        <end position="253"/>
    </location>
</feature>
<feature type="helix" evidence="7">
    <location>
        <begin position="254"/>
        <end position="258"/>
    </location>
</feature>
<feature type="helix" evidence="7">
    <location>
        <begin position="261"/>
        <end position="264"/>
    </location>
</feature>
<feature type="strand" evidence="7">
    <location>
        <begin position="265"/>
        <end position="267"/>
    </location>
</feature>
<feature type="strand" evidence="7">
    <location>
        <begin position="272"/>
        <end position="276"/>
    </location>
</feature>
<feature type="strand" evidence="7">
    <location>
        <begin position="278"/>
        <end position="285"/>
    </location>
</feature>
<feature type="helix" evidence="7">
    <location>
        <begin position="300"/>
        <end position="311"/>
    </location>
</feature>
<feature type="strand" evidence="7">
    <location>
        <begin position="323"/>
        <end position="328"/>
    </location>
</feature>
<feature type="helix" evidence="7">
    <location>
        <begin position="329"/>
        <end position="337"/>
    </location>
</feature>
<accession>O33194</accession>
<accession>F2GK45</accession>
<accession>I6XYN9</accession>
<accession>Q7D849</accession>